<gene>
    <name type="primary">Fdx1</name>
</gene>
<keyword id="KW-0001">2Fe-2S</keyword>
<keyword id="KW-0007">Acetylation</keyword>
<keyword id="KW-0153">Cholesterol metabolism</keyword>
<keyword id="KW-0249">Electron transport</keyword>
<keyword id="KW-0408">Iron</keyword>
<keyword id="KW-0411">Iron-sulfur</keyword>
<keyword id="KW-0443">Lipid metabolism</keyword>
<keyword id="KW-0479">Metal-binding</keyword>
<keyword id="KW-0496">Mitochondrion</keyword>
<keyword id="KW-0597">Phosphoprotein</keyword>
<keyword id="KW-1185">Reference proteome</keyword>
<keyword id="KW-0753">Steroid metabolism</keyword>
<keyword id="KW-0755">Steroidogenesis</keyword>
<keyword id="KW-1207">Sterol metabolism</keyword>
<keyword id="KW-0809">Transit peptide</keyword>
<keyword id="KW-0813">Transport</keyword>
<evidence type="ECO:0000250" key="1"/>
<evidence type="ECO:0000250" key="2">
    <source>
        <dbReference type="UniProtKB" id="P00257"/>
    </source>
</evidence>
<evidence type="ECO:0000250" key="3">
    <source>
        <dbReference type="UniProtKB" id="P10109"/>
    </source>
</evidence>
<evidence type="ECO:0000255" key="4">
    <source>
        <dbReference type="PROSITE-ProRule" id="PRU00465"/>
    </source>
</evidence>
<evidence type="ECO:0000305" key="5"/>
<evidence type="ECO:0007744" key="6">
    <source>
    </source>
</evidence>
<evidence type="ECO:0007744" key="7">
    <source>
    </source>
</evidence>
<evidence type="ECO:0007744" key="8">
    <source>
    </source>
</evidence>
<protein>
    <recommendedName>
        <fullName>Adrenodoxin, mitochondrial</fullName>
    </recommendedName>
    <alternativeName>
        <fullName>Adrenal ferredoxin</fullName>
    </alternativeName>
    <alternativeName>
        <fullName>Ferredoxin-1</fullName>
    </alternativeName>
</protein>
<sequence length="188" mass="20123">MAAAPGARLLRAACASVPFRGLDRCRLLVCGTGAGTAISPWTPSPRLHAEAGPGRPLSVSARARSSSEDKITVHFKNRDGETLTTKGKIGDSLLDVVIENNLDIDGFGACEGTLACSTCHLIFEDHIYEKLDAITDEENDMLDLAFGLTDRSRLGCQVCLTKAMDNMTVRVPEAVADVRQSVDMSKNS</sequence>
<dbReference type="EMBL" id="L29123">
    <property type="protein sequence ID" value="AAA74303.1"/>
    <property type="molecule type" value="mRNA"/>
</dbReference>
<dbReference type="EMBL" id="D43689">
    <property type="protein sequence ID" value="BAA07786.1"/>
    <property type="molecule type" value="mRNA"/>
</dbReference>
<dbReference type="EMBL" id="D43690">
    <property type="protein sequence ID" value="BAA07787.1"/>
    <property type="molecule type" value="mRNA"/>
</dbReference>
<dbReference type="CCDS" id="CCDS23178.1"/>
<dbReference type="PIR" id="S53524">
    <property type="entry name" value="S53524"/>
</dbReference>
<dbReference type="RefSeq" id="NP_001288657.1">
    <property type="nucleotide sequence ID" value="NM_001301728.1"/>
</dbReference>
<dbReference type="RefSeq" id="NP_032022.1">
    <property type="nucleotide sequence ID" value="NM_007996.2"/>
</dbReference>
<dbReference type="SMR" id="P46656"/>
<dbReference type="BioGRID" id="199626">
    <property type="interactions" value="4"/>
</dbReference>
<dbReference type="FunCoup" id="P46656">
    <property type="interactions" value="1146"/>
</dbReference>
<dbReference type="STRING" id="10090.ENSMUSP00000034552"/>
<dbReference type="GlyGen" id="P46656">
    <property type="glycosylation" value="1 site, 1 O-linked glycan (1 site)"/>
</dbReference>
<dbReference type="iPTMnet" id="P46656"/>
<dbReference type="PhosphoSitePlus" id="P46656"/>
<dbReference type="SwissPalm" id="P46656"/>
<dbReference type="jPOST" id="P46656"/>
<dbReference type="PaxDb" id="10090-ENSMUSP00000034552"/>
<dbReference type="PeptideAtlas" id="P46656"/>
<dbReference type="ProteomicsDB" id="296072"/>
<dbReference type="Pumba" id="P46656"/>
<dbReference type="Antibodypedia" id="32013">
    <property type="antibodies" value="121 antibodies from 24 providers"/>
</dbReference>
<dbReference type="DNASU" id="14148"/>
<dbReference type="Ensembl" id="ENSMUST00000034552.8">
    <property type="protein sequence ID" value="ENSMUSP00000034552.7"/>
    <property type="gene ID" value="ENSMUSG00000032051.10"/>
</dbReference>
<dbReference type="GeneID" id="14148"/>
<dbReference type="KEGG" id="mmu:14148"/>
<dbReference type="UCSC" id="uc009plo.2">
    <property type="organism name" value="mouse"/>
</dbReference>
<dbReference type="AGR" id="MGI:103224"/>
<dbReference type="CTD" id="2230"/>
<dbReference type="MGI" id="MGI:103224">
    <property type="gene designation" value="Fdx1"/>
</dbReference>
<dbReference type="VEuPathDB" id="HostDB:ENSMUSG00000032051"/>
<dbReference type="eggNOG" id="KOG3309">
    <property type="taxonomic scope" value="Eukaryota"/>
</dbReference>
<dbReference type="GeneTree" id="ENSGT00940000156916"/>
<dbReference type="HOGENOM" id="CLU_082632_2_1_1"/>
<dbReference type="InParanoid" id="P46656"/>
<dbReference type="OMA" id="VARNCIR"/>
<dbReference type="OrthoDB" id="268593at2759"/>
<dbReference type="PhylomeDB" id="P46656"/>
<dbReference type="TreeFam" id="TF319845"/>
<dbReference type="Reactome" id="R-MMU-1362409">
    <property type="pathway name" value="Mitochondrial iron-sulfur cluster biogenesis"/>
</dbReference>
<dbReference type="Reactome" id="R-MMU-196108">
    <property type="pathway name" value="Pregnenolone biosynthesis"/>
</dbReference>
<dbReference type="Reactome" id="R-MMU-211976">
    <property type="pathway name" value="Endogenous sterols"/>
</dbReference>
<dbReference type="Reactome" id="R-MMU-2395516">
    <property type="pathway name" value="Electron transport from NADPH to Ferredoxin"/>
</dbReference>
<dbReference type="Reactome" id="R-MMU-9857492">
    <property type="pathway name" value="Protein lipoylation"/>
</dbReference>
<dbReference type="BioGRID-ORCS" id="14148">
    <property type="hits" value="10 hits in 80 CRISPR screens"/>
</dbReference>
<dbReference type="ChiTaRS" id="Fdx1">
    <property type="organism name" value="mouse"/>
</dbReference>
<dbReference type="PRO" id="PR:P46656"/>
<dbReference type="Proteomes" id="UP000000589">
    <property type="component" value="Chromosome 9"/>
</dbReference>
<dbReference type="RNAct" id="P46656">
    <property type="molecule type" value="protein"/>
</dbReference>
<dbReference type="Bgee" id="ENSMUSG00000032051">
    <property type="expression patterns" value="Expressed in adrenal gland and 261 other cell types or tissues"/>
</dbReference>
<dbReference type="ExpressionAtlas" id="P46656">
    <property type="expression patterns" value="baseline and differential"/>
</dbReference>
<dbReference type="GO" id="GO:0005759">
    <property type="term" value="C:mitochondrial matrix"/>
    <property type="evidence" value="ECO:0000250"/>
    <property type="project" value="UniProtKB"/>
</dbReference>
<dbReference type="GO" id="GO:0005739">
    <property type="term" value="C:mitochondrion"/>
    <property type="evidence" value="ECO:0007005"/>
    <property type="project" value="MGI"/>
</dbReference>
<dbReference type="GO" id="GO:0051537">
    <property type="term" value="F:2 iron, 2 sulfur cluster binding"/>
    <property type="evidence" value="ECO:0000250"/>
    <property type="project" value="UniProtKB"/>
</dbReference>
<dbReference type="GO" id="GO:0009055">
    <property type="term" value="F:electron transfer activity"/>
    <property type="evidence" value="ECO:0000250"/>
    <property type="project" value="UniProtKB"/>
</dbReference>
<dbReference type="GO" id="GO:0046872">
    <property type="term" value="F:metal ion binding"/>
    <property type="evidence" value="ECO:0007669"/>
    <property type="project" value="UniProtKB-KW"/>
</dbReference>
<dbReference type="GO" id="GO:0071320">
    <property type="term" value="P:cellular response to cAMP"/>
    <property type="evidence" value="ECO:0000314"/>
    <property type="project" value="MGI"/>
</dbReference>
<dbReference type="GO" id="GO:1904322">
    <property type="term" value="P:cellular response to forskolin"/>
    <property type="evidence" value="ECO:0000314"/>
    <property type="project" value="MGI"/>
</dbReference>
<dbReference type="GO" id="GO:0008203">
    <property type="term" value="P:cholesterol metabolic process"/>
    <property type="evidence" value="ECO:0000250"/>
    <property type="project" value="UniProtKB"/>
</dbReference>
<dbReference type="GO" id="GO:0042446">
    <property type="term" value="P:hormone biosynthetic process"/>
    <property type="evidence" value="ECO:0000250"/>
    <property type="project" value="UniProtKB"/>
</dbReference>
<dbReference type="GO" id="GO:0140647">
    <property type="term" value="P:P450-containing electron transport chain"/>
    <property type="evidence" value="ECO:0007669"/>
    <property type="project" value="InterPro"/>
</dbReference>
<dbReference type="GO" id="GO:0006694">
    <property type="term" value="P:steroid biosynthetic process"/>
    <property type="evidence" value="ECO:0007669"/>
    <property type="project" value="UniProtKB-KW"/>
</dbReference>
<dbReference type="CDD" id="cd00207">
    <property type="entry name" value="fer2"/>
    <property type="match status" value="1"/>
</dbReference>
<dbReference type="FunFam" id="3.10.20.30:FF:000013">
    <property type="entry name" value="Adrenodoxin, mitochondrial"/>
    <property type="match status" value="1"/>
</dbReference>
<dbReference type="Gene3D" id="3.10.20.30">
    <property type="match status" value="1"/>
</dbReference>
<dbReference type="InterPro" id="IPR036010">
    <property type="entry name" value="2Fe-2S_ferredoxin-like_sf"/>
</dbReference>
<dbReference type="InterPro" id="IPR001041">
    <property type="entry name" value="2Fe-2S_ferredoxin-type"/>
</dbReference>
<dbReference type="InterPro" id="IPR001055">
    <property type="entry name" value="Adrenodoxin-like"/>
</dbReference>
<dbReference type="InterPro" id="IPR018298">
    <property type="entry name" value="Adrenodoxin_Fe-S_BS"/>
</dbReference>
<dbReference type="InterPro" id="IPR012675">
    <property type="entry name" value="Beta-grasp_dom_sf"/>
</dbReference>
<dbReference type="PANTHER" id="PTHR23426:SF26">
    <property type="entry name" value="ADRENODOXIN, MITOCHONDRIAL"/>
    <property type="match status" value="1"/>
</dbReference>
<dbReference type="PANTHER" id="PTHR23426">
    <property type="entry name" value="FERREDOXIN/ADRENODOXIN"/>
    <property type="match status" value="1"/>
</dbReference>
<dbReference type="Pfam" id="PF00111">
    <property type="entry name" value="Fer2"/>
    <property type="match status" value="1"/>
</dbReference>
<dbReference type="PRINTS" id="PR00355">
    <property type="entry name" value="ADRENODOXIN"/>
</dbReference>
<dbReference type="SUPFAM" id="SSF54292">
    <property type="entry name" value="2Fe-2S ferredoxin-like"/>
    <property type="match status" value="1"/>
</dbReference>
<dbReference type="PROSITE" id="PS51085">
    <property type="entry name" value="2FE2S_FER_2"/>
    <property type="match status" value="1"/>
</dbReference>
<dbReference type="PROSITE" id="PS00814">
    <property type="entry name" value="ADX"/>
    <property type="match status" value="1"/>
</dbReference>
<proteinExistence type="evidence at protein level"/>
<reference key="1">
    <citation type="journal article" date="1995" name="Biochim. Biophys. Acta">
        <title>A full-length cDNA encoding mouse adrenodoxin.</title>
        <authorList>
            <person name="Stromstedt M."/>
            <person name="Waterman M.R."/>
        </authorList>
    </citation>
    <scope>NUCLEOTIDE SEQUENCE [MRNA]</scope>
    <source>
        <tissue>Adrenal gland</tissue>
    </source>
</reference>
<reference key="2">
    <citation type="journal article" date="1995" name="Biochim. Biophys. Acta">
        <title>Mouse cytochrome P-450 linked ferredoxin: its cDNA cloning and inducibility by dibutyryladenosine 3',5'-cyclic monophosphate and forskolin.</title>
        <authorList>
            <person name="Itoh S."/>
            <person name="Iemura O."/>
            <person name="Yamada E."/>
            <person name="Yoshimura T."/>
            <person name="Tsujikawa K."/>
            <person name="Kohama Y."/>
            <person name="Mimura T."/>
        </authorList>
    </citation>
    <scope>NUCLEOTIDE SEQUENCE [MRNA]</scope>
    <source>
        <strain>C57BL/6J</strain>
        <tissue>Kidney</tissue>
    </source>
</reference>
<reference key="3">
    <citation type="journal article" date="2010" name="Cell">
        <title>A tissue-specific atlas of mouse protein phosphorylation and expression.</title>
        <authorList>
            <person name="Huttlin E.L."/>
            <person name="Jedrychowski M.P."/>
            <person name="Elias J.E."/>
            <person name="Goswami T."/>
            <person name="Rad R."/>
            <person name="Beausoleil S.A."/>
            <person name="Villen J."/>
            <person name="Haas W."/>
            <person name="Sowa M.E."/>
            <person name="Gygi S.P."/>
        </authorList>
    </citation>
    <scope>PHOSPHORYLATION [LARGE SCALE ANALYSIS] AT SER-67</scope>
    <scope>IDENTIFICATION BY MASS SPECTROMETRY [LARGE SCALE ANALYSIS]</scope>
    <source>
        <tissue>Brain</tissue>
        <tissue>Brown adipose tissue</tissue>
        <tissue>Heart</tissue>
        <tissue>Kidney</tissue>
        <tissue>Liver</tissue>
        <tissue>Testis</tissue>
    </source>
</reference>
<reference key="4">
    <citation type="journal article" date="2013" name="Mol. Cell">
        <title>SIRT5-mediated lysine desuccinylation impacts diverse metabolic pathways.</title>
        <authorList>
            <person name="Park J."/>
            <person name="Chen Y."/>
            <person name="Tishkoff D.X."/>
            <person name="Peng C."/>
            <person name="Tan M."/>
            <person name="Dai L."/>
            <person name="Xie Z."/>
            <person name="Zhang Y."/>
            <person name="Zwaans B.M."/>
            <person name="Skinner M.E."/>
            <person name="Lombard D.B."/>
            <person name="Zhao Y."/>
        </authorList>
    </citation>
    <scope>SUCCINYLATION [LARGE SCALE ANALYSIS] AT LYS-70 AND LYS-162</scope>
    <scope>IDENTIFICATION BY MASS SPECTROMETRY [LARGE SCALE ANALYSIS]</scope>
    <source>
        <tissue>Liver</tissue>
    </source>
</reference>
<reference key="5">
    <citation type="journal article" date="2013" name="Proc. Natl. Acad. Sci. U.S.A.">
        <title>Label-free quantitative proteomics of the lysine acetylome in mitochondria identifies substrates of SIRT3 in metabolic pathways.</title>
        <authorList>
            <person name="Rardin M.J."/>
            <person name="Newman J.C."/>
            <person name="Held J.M."/>
            <person name="Cusack M.P."/>
            <person name="Sorensen D.J."/>
            <person name="Li B."/>
            <person name="Schilling B."/>
            <person name="Mooney S.D."/>
            <person name="Kahn C.R."/>
            <person name="Verdin E."/>
            <person name="Gibson B.W."/>
        </authorList>
    </citation>
    <scope>ACETYLATION [LARGE SCALE ANALYSIS] AT LYS-70</scope>
    <scope>IDENTIFICATION BY MASS SPECTROMETRY [LARGE SCALE ANALYSIS]</scope>
    <source>
        <tissue>Liver</tissue>
    </source>
</reference>
<accession>P46656</accession>
<organism>
    <name type="scientific">Mus musculus</name>
    <name type="common">Mouse</name>
    <dbReference type="NCBI Taxonomy" id="10090"/>
    <lineage>
        <taxon>Eukaryota</taxon>
        <taxon>Metazoa</taxon>
        <taxon>Chordata</taxon>
        <taxon>Craniata</taxon>
        <taxon>Vertebrata</taxon>
        <taxon>Euteleostomi</taxon>
        <taxon>Mammalia</taxon>
        <taxon>Eutheria</taxon>
        <taxon>Euarchontoglires</taxon>
        <taxon>Glires</taxon>
        <taxon>Rodentia</taxon>
        <taxon>Myomorpha</taxon>
        <taxon>Muroidea</taxon>
        <taxon>Muridae</taxon>
        <taxon>Murinae</taxon>
        <taxon>Mus</taxon>
        <taxon>Mus</taxon>
    </lineage>
</organism>
<name>ADX_MOUSE</name>
<feature type="transit peptide" description="Mitochondrion" evidence="1">
    <location>
        <begin position="1"/>
        <end position="64"/>
    </location>
</feature>
<feature type="chain" id="PRO_0000000989" description="Adrenodoxin, mitochondrial">
    <location>
        <begin position="65"/>
        <end position="188"/>
    </location>
</feature>
<feature type="domain" description="2Fe-2S ferredoxin-type" evidence="4">
    <location>
        <begin position="69"/>
        <end position="175"/>
    </location>
</feature>
<feature type="binding site" evidence="4">
    <location>
        <position position="110"/>
    </location>
    <ligand>
        <name>[2Fe-2S] cluster</name>
        <dbReference type="ChEBI" id="CHEBI:190135"/>
    </ligand>
</feature>
<feature type="binding site" evidence="4">
    <location>
        <position position="116"/>
    </location>
    <ligand>
        <name>[2Fe-2S] cluster</name>
        <dbReference type="ChEBI" id="CHEBI:190135"/>
    </ligand>
</feature>
<feature type="binding site" evidence="4">
    <location>
        <position position="119"/>
    </location>
    <ligand>
        <name>[2Fe-2S] cluster</name>
        <dbReference type="ChEBI" id="CHEBI:190135"/>
    </ligand>
</feature>
<feature type="binding site" evidence="4">
    <location>
        <position position="156"/>
    </location>
    <ligand>
        <name>[2Fe-2S] cluster</name>
        <dbReference type="ChEBI" id="CHEBI:190135"/>
    </ligand>
</feature>
<feature type="modified residue" description="Phosphoserine" evidence="6">
    <location>
        <position position="67"/>
    </location>
</feature>
<feature type="modified residue" description="N6-acetyllysine; alternate" evidence="7">
    <location>
        <position position="70"/>
    </location>
</feature>
<feature type="modified residue" description="N6-succinyllysine; alternate" evidence="8">
    <location>
        <position position="70"/>
    </location>
</feature>
<feature type="modified residue" description="N6-succinyllysine" evidence="8">
    <location>
        <position position="162"/>
    </location>
</feature>
<feature type="modified residue" description="Phosphoserine" evidence="3">
    <location>
        <position position="181"/>
    </location>
</feature>
<comment type="function">
    <text evidence="2">Essential for the synthesis of various steroid hormones, participates in the reduction of mitochondrial cytochrome P450 for steroidogenesis. Transfers electrons from adrenodoxin reductase to CYP11A1, a cytochrome P450 that catalyzes cholesterol side-chain cleavage. Does not form a ternary complex with adrenodoxin reductase and CYP11A1 but shuttles between the two enzymes to transfer electrons.</text>
</comment>
<comment type="cofactor">
    <cofactor evidence="3">
        <name>[2Fe-2S] cluster</name>
        <dbReference type="ChEBI" id="CHEBI:190135"/>
    </cofactor>
    <text evidence="3">Binds 1 [2Fe-2S] cluster.</text>
</comment>
<comment type="subunit">
    <text evidence="3">Interacts with CYP11A1.</text>
</comment>
<comment type="subcellular location">
    <subcellularLocation>
        <location evidence="3">Mitochondrion matrix</location>
    </subcellularLocation>
</comment>
<comment type="similarity">
    <text evidence="5">Belongs to the adrenodoxin/putidaredoxin family.</text>
</comment>